<feature type="chain" id="PRO_0000289437" description="Lipoprotein signal peptidase">
    <location>
        <begin position="1"/>
        <end position="154"/>
    </location>
</feature>
<feature type="transmembrane region" description="Helical" evidence="1">
    <location>
        <begin position="4"/>
        <end position="24"/>
    </location>
</feature>
<feature type="transmembrane region" description="Helical" evidence="1">
    <location>
        <begin position="62"/>
        <end position="82"/>
    </location>
</feature>
<feature type="transmembrane region" description="Helical" evidence="1">
    <location>
        <begin position="84"/>
        <end position="104"/>
    </location>
</feature>
<feature type="transmembrane region" description="Helical" evidence="1">
    <location>
        <begin position="125"/>
        <end position="145"/>
    </location>
</feature>
<feature type="active site" evidence="1">
    <location>
        <position position="114"/>
    </location>
</feature>
<feature type="active site" evidence="1">
    <location>
        <position position="130"/>
    </location>
</feature>
<comment type="function">
    <text evidence="1">This protein specifically catalyzes the removal of signal peptides from prolipoproteins.</text>
</comment>
<comment type="catalytic activity">
    <reaction evidence="1">
        <text>Release of signal peptides from bacterial membrane prolipoproteins. Hydrolyzes -Xaa-Yaa-Zaa-|-(S,diacylglyceryl)Cys-, in which Xaa is hydrophobic (preferably Leu), and Yaa (Ala or Ser) and Zaa (Gly or Ala) have small, neutral side chains.</text>
        <dbReference type="EC" id="3.4.23.36"/>
    </reaction>
</comment>
<comment type="pathway">
    <text evidence="1">Protein modification; lipoprotein biosynthesis (signal peptide cleavage).</text>
</comment>
<comment type="subcellular location">
    <subcellularLocation>
        <location evidence="1">Cell membrane</location>
        <topology evidence="1">Multi-pass membrane protein</topology>
    </subcellularLocation>
</comment>
<comment type="similarity">
    <text evidence="1">Belongs to the peptidase A8 family.</text>
</comment>
<dbReference type="EC" id="3.4.23.36" evidence="1"/>
<dbReference type="EMBL" id="AE009948">
    <property type="protein sequence ID" value="AAN00237.1"/>
    <property type="molecule type" value="Genomic_DNA"/>
</dbReference>
<dbReference type="RefSeq" id="NP_688364.1">
    <property type="nucleotide sequence ID" value="NC_004116.1"/>
</dbReference>
<dbReference type="RefSeq" id="WP_001226253.1">
    <property type="nucleotide sequence ID" value="NC_004116.1"/>
</dbReference>
<dbReference type="SMR" id="Q8DYV7"/>
<dbReference type="STRING" id="208435.SAG1366"/>
<dbReference type="KEGG" id="sag:SAG1366"/>
<dbReference type="PATRIC" id="fig|208435.3.peg.1374"/>
<dbReference type="HOGENOM" id="CLU_083252_3_3_9"/>
<dbReference type="OrthoDB" id="9810259at2"/>
<dbReference type="UniPathway" id="UPA00665"/>
<dbReference type="Proteomes" id="UP000000821">
    <property type="component" value="Chromosome"/>
</dbReference>
<dbReference type="GO" id="GO:0005886">
    <property type="term" value="C:plasma membrane"/>
    <property type="evidence" value="ECO:0007669"/>
    <property type="project" value="UniProtKB-SubCell"/>
</dbReference>
<dbReference type="GO" id="GO:0004190">
    <property type="term" value="F:aspartic-type endopeptidase activity"/>
    <property type="evidence" value="ECO:0007669"/>
    <property type="project" value="UniProtKB-UniRule"/>
</dbReference>
<dbReference type="GO" id="GO:0006508">
    <property type="term" value="P:proteolysis"/>
    <property type="evidence" value="ECO:0007669"/>
    <property type="project" value="UniProtKB-KW"/>
</dbReference>
<dbReference type="HAMAP" id="MF_00161">
    <property type="entry name" value="LspA"/>
    <property type="match status" value="1"/>
</dbReference>
<dbReference type="InterPro" id="IPR001872">
    <property type="entry name" value="Peptidase_A8"/>
</dbReference>
<dbReference type="NCBIfam" id="TIGR00077">
    <property type="entry name" value="lspA"/>
    <property type="match status" value="1"/>
</dbReference>
<dbReference type="PANTHER" id="PTHR33695">
    <property type="entry name" value="LIPOPROTEIN SIGNAL PEPTIDASE"/>
    <property type="match status" value="1"/>
</dbReference>
<dbReference type="PANTHER" id="PTHR33695:SF1">
    <property type="entry name" value="LIPOPROTEIN SIGNAL PEPTIDASE"/>
    <property type="match status" value="1"/>
</dbReference>
<dbReference type="Pfam" id="PF01252">
    <property type="entry name" value="Peptidase_A8"/>
    <property type="match status" value="1"/>
</dbReference>
<dbReference type="PRINTS" id="PR00781">
    <property type="entry name" value="LIPOSIGPTASE"/>
</dbReference>
<dbReference type="PROSITE" id="PS00855">
    <property type="entry name" value="SPASE_II"/>
    <property type="match status" value="1"/>
</dbReference>
<sequence length="154" mass="17649">MRKIIIPIITILLIALDQLSKLWIVKHIELNQIKEFIPNIVSLTYLRNYGAAFSILQNQQWLFTLITIFVVGVAIIYLMKHINGSYWLLISLTLIISGGLGNFIDRLRLGYVVDMVHLDFINFAIFNVADSYLTIGIICLMIALWKEESNGNHN</sequence>
<organism>
    <name type="scientific">Streptococcus agalactiae serotype V (strain ATCC BAA-611 / 2603 V/R)</name>
    <dbReference type="NCBI Taxonomy" id="208435"/>
    <lineage>
        <taxon>Bacteria</taxon>
        <taxon>Bacillati</taxon>
        <taxon>Bacillota</taxon>
        <taxon>Bacilli</taxon>
        <taxon>Lactobacillales</taxon>
        <taxon>Streptococcaceae</taxon>
        <taxon>Streptococcus</taxon>
    </lineage>
</organism>
<evidence type="ECO:0000255" key="1">
    <source>
        <dbReference type="HAMAP-Rule" id="MF_00161"/>
    </source>
</evidence>
<accession>Q8DYV7</accession>
<gene>
    <name evidence="1" type="primary">lspA</name>
    <name type="ordered locus">SAG1366</name>
</gene>
<name>LSPA_STRA5</name>
<keyword id="KW-0064">Aspartyl protease</keyword>
<keyword id="KW-1003">Cell membrane</keyword>
<keyword id="KW-0378">Hydrolase</keyword>
<keyword id="KW-0472">Membrane</keyword>
<keyword id="KW-0645">Protease</keyword>
<keyword id="KW-1185">Reference proteome</keyword>
<keyword id="KW-0812">Transmembrane</keyword>
<keyword id="KW-1133">Transmembrane helix</keyword>
<reference key="1">
    <citation type="journal article" date="2002" name="Proc. Natl. Acad. Sci. U.S.A.">
        <title>Complete genome sequence and comparative genomic analysis of an emerging human pathogen, serotype V Streptococcus agalactiae.</title>
        <authorList>
            <person name="Tettelin H."/>
            <person name="Masignani V."/>
            <person name="Cieslewicz M.J."/>
            <person name="Eisen J.A."/>
            <person name="Peterson S.N."/>
            <person name="Wessels M.R."/>
            <person name="Paulsen I.T."/>
            <person name="Nelson K.E."/>
            <person name="Margarit I."/>
            <person name="Read T.D."/>
            <person name="Madoff L.C."/>
            <person name="Wolf A.M."/>
            <person name="Beanan M.J."/>
            <person name="Brinkac L.M."/>
            <person name="Daugherty S.C."/>
            <person name="DeBoy R.T."/>
            <person name="Durkin A.S."/>
            <person name="Kolonay J.F."/>
            <person name="Madupu R."/>
            <person name="Lewis M.R."/>
            <person name="Radune D."/>
            <person name="Fedorova N.B."/>
            <person name="Scanlan D."/>
            <person name="Khouri H.M."/>
            <person name="Mulligan S."/>
            <person name="Carty H.A."/>
            <person name="Cline R.T."/>
            <person name="Van Aken S.E."/>
            <person name="Gill J."/>
            <person name="Scarselli M."/>
            <person name="Mora M."/>
            <person name="Iacobini E.T."/>
            <person name="Brettoni C."/>
            <person name="Galli G."/>
            <person name="Mariani M."/>
            <person name="Vegni F."/>
            <person name="Maione D."/>
            <person name="Rinaudo D."/>
            <person name="Rappuoli R."/>
            <person name="Telford J.L."/>
            <person name="Kasper D.L."/>
            <person name="Grandi G."/>
            <person name="Fraser C.M."/>
        </authorList>
    </citation>
    <scope>NUCLEOTIDE SEQUENCE [LARGE SCALE GENOMIC DNA]</scope>
    <source>
        <strain>ATCC BAA-611 / 2603 V/R</strain>
    </source>
</reference>
<protein>
    <recommendedName>
        <fullName evidence="1">Lipoprotein signal peptidase</fullName>
        <ecNumber evidence="1">3.4.23.36</ecNumber>
    </recommendedName>
    <alternativeName>
        <fullName evidence="1">Prolipoprotein signal peptidase</fullName>
    </alternativeName>
    <alternativeName>
        <fullName evidence="1">Signal peptidase II</fullName>
        <shortName evidence="1">SPase II</shortName>
    </alternativeName>
</protein>
<proteinExistence type="inferred from homology"/>